<gene>
    <name type="ordered locus">Rv1303</name>
    <name type="ORF">MTCY373.23</name>
</gene>
<evidence type="ECO:0000255" key="1"/>
<evidence type="ECO:0000256" key="2">
    <source>
        <dbReference type="SAM" id="MobiDB-lite"/>
    </source>
</evidence>
<evidence type="ECO:0000305" key="3"/>
<proteinExistence type="evidence at protein level"/>
<accession>P9WM31</accession>
<accession>L0T7V8</accession>
<accession>P64801</accession>
<accession>Q10619</accession>
<keyword id="KW-1003">Cell membrane</keyword>
<keyword id="KW-0472">Membrane</keyword>
<keyword id="KW-1185">Reference proteome</keyword>
<keyword id="KW-0812">Transmembrane</keyword>
<keyword id="KW-1133">Transmembrane helix</keyword>
<name>Y1303_MYCTU</name>
<protein>
    <recommendedName>
        <fullName>Uncharacterized protein Rv1303</fullName>
    </recommendedName>
</protein>
<comment type="subcellular location">
    <subcellularLocation>
        <location evidence="3">Cell membrane</location>
        <topology evidence="3">Multi-pass membrane protein</topology>
    </subcellularLocation>
</comment>
<comment type="miscellaneous">
    <text>Was identified as a high-confidence drug target.</text>
</comment>
<comment type="similarity">
    <text evidence="3">To M.leprae ML1138.</text>
</comment>
<organism>
    <name type="scientific">Mycobacterium tuberculosis (strain ATCC 25618 / H37Rv)</name>
    <dbReference type="NCBI Taxonomy" id="83332"/>
    <lineage>
        <taxon>Bacteria</taxon>
        <taxon>Bacillati</taxon>
        <taxon>Actinomycetota</taxon>
        <taxon>Actinomycetes</taxon>
        <taxon>Mycobacteriales</taxon>
        <taxon>Mycobacteriaceae</taxon>
        <taxon>Mycobacterium</taxon>
        <taxon>Mycobacterium tuberculosis complex</taxon>
    </lineage>
</organism>
<reference key="1">
    <citation type="journal article" date="1998" name="Nature">
        <title>Deciphering the biology of Mycobacterium tuberculosis from the complete genome sequence.</title>
        <authorList>
            <person name="Cole S.T."/>
            <person name="Brosch R."/>
            <person name="Parkhill J."/>
            <person name="Garnier T."/>
            <person name="Churcher C.M."/>
            <person name="Harris D.E."/>
            <person name="Gordon S.V."/>
            <person name="Eiglmeier K."/>
            <person name="Gas S."/>
            <person name="Barry C.E. III"/>
            <person name="Tekaia F."/>
            <person name="Badcock K."/>
            <person name="Basham D."/>
            <person name="Brown D."/>
            <person name="Chillingworth T."/>
            <person name="Connor R."/>
            <person name="Davies R.M."/>
            <person name="Devlin K."/>
            <person name="Feltwell T."/>
            <person name="Gentles S."/>
            <person name="Hamlin N."/>
            <person name="Holroyd S."/>
            <person name="Hornsby T."/>
            <person name="Jagels K."/>
            <person name="Krogh A."/>
            <person name="McLean J."/>
            <person name="Moule S."/>
            <person name="Murphy L.D."/>
            <person name="Oliver S."/>
            <person name="Osborne J."/>
            <person name="Quail M.A."/>
            <person name="Rajandream M.A."/>
            <person name="Rogers J."/>
            <person name="Rutter S."/>
            <person name="Seeger K."/>
            <person name="Skelton S."/>
            <person name="Squares S."/>
            <person name="Squares R."/>
            <person name="Sulston J.E."/>
            <person name="Taylor K."/>
            <person name="Whitehead S."/>
            <person name="Barrell B.G."/>
        </authorList>
    </citation>
    <scope>NUCLEOTIDE SEQUENCE [LARGE SCALE GENOMIC DNA]</scope>
    <source>
        <strain>ATCC 25618 / H37Rv</strain>
    </source>
</reference>
<reference key="2">
    <citation type="journal article" date="2008" name="BMC Syst. Biol.">
        <title>targetTB: a target identification pipeline for Mycobacterium tuberculosis through an interactome, reactome and genome-scale structural analysis.</title>
        <authorList>
            <person name="Raman K."/>
            <person name="Yeturu K."/>
            <person name="Chandra N."/>
        </authorList>
    </citation>
    <scope>IDENTIFICATION AS A DRUG TARGET [LARGE SCALE ANALYSIS]</scope>
</reference>
<reference key="3">
    <citation type="journal article" date="2011" name="Mol. Cell. Proteomics">
        <title>Proteogenomic analysis of Mycobacterium tuberculosis by high resolution mass spectrometry.</title>
        <authorList>
            <person name="Kelkar D.S."/>
            <person name="Kumar D."/>
            <person name="Kumar P."/>
            <person name="Balakrishnan L."/>
            <person name="Muthusamy B."/>
            <person name="Yadav A.K."/>
            <person name="Shrivastava P."/>
            <person name="Marimuthu A."/>
            <person name="Anand S."/>
            <person name="Sundaram H."/>
            <person name="Kingsbury R."/>
            <person name="Harsha H.C."/>
            <person name="Nair B."/>
            <person name="Prasad T.S."/>
            <person name="Chauhan D.S."/>
            <person name="Katoch K."/>
            <person name="Katoch V.M."/>
            <person name="Kumar P."/>
            <person name="Chaerkady R."/>
            <person name="Ramachandran S."/>
            <person name="Dash D."/>
            <person name="Pandey A."/>
        </authorList>
    </citation>
    <scope>IDENTIFICATION BY MASS SPECTROMETRY [LARGE SCALE ANALYSIS]</scope>
    <source>
        <strain>ATCC 25618 / H37Rv</strain>
    </source>
</reference>
<sequence>MTTPAQDAPLVFPSVAFRPVRLFFINVGLAAVAMLVAGVFGHLTVGMFLGLGLLLGLLNALLVRRSAESITAKEHPLKRSMALNSASRLAIITILGLIIAYIFRPAGLGVVFGLAFFQVLLVATTALPVLKKLRTATEEPVATYSSNGQTGGSEGRSASDD</sequence>
<feature type="chain" id="PRO_0000103793" description="Uncharacterized protein Rv1303">
    <location>
        <begin position="1"/>
        <end position="161"/>
    </location>
</feature>
<feature type="transmembrane region" description="Helical" evidence="1">
    <location>
        <begin position="22"/>
        <end position="42"/>
    </location>
</feature>
<feature type="transmembrane region" description="Helical" evidence="1">
    <location>
        <begin position="43"/>
        <end position="63"/>
    </location>
</feature>
<feature type="transmembrane region" description="Helical" evidence="1">
    <location>
        <begin position="89"/>
        <end position="109"/>
    </location>
</feature>
<feature type="transmembrane region" description="Helical" evidence="1">
    <location>
        <begin position="110"/>
        <end position="130"/>
    </location>
</feature>
<feature type="region of interest" description="Disordered" evidence="2">
    <location>
        <begin position="141"/>
        <end position="161"/>
    </location>
</feature>
<dbReference type="EMBL" id="AL123456">
    <property type="protein sequence ID" value="CCP44060.1"/>
    <property type="molecule type" value="Genomic_DNA"/>
</dbReference>
<dbReference type="PIR" id="C70774">
    <property type="entry name" value="C70774"/>
</dbReference>
<dbReference type="RefSeq" id="NP_215819.1">
    <property type="nucleotide sequence ID" value="NC_000962.3"/>
</dbReference>
<dbReference type="RefSeq" id="WP_003406680.1">
    <property type="nucleotide sequence ID" value="NZ_NVQJ01000030.1"/>
</dbReference>
<dbReference type="STRING" id="83332.Rv1303"/>
<dbReference type="PaxDb" id="83332-Rv1303"/>
<dbReference type="GeneID" id="886944"/>
<dbReference type="KEGG" id="mtu:Rv1303"/>
<dbReference type="KEGG" id="mtv:RVBD_1303"/>
<dbReference type="TubercuList" id="Rv1303"/>
<dbReference type="eggNOG" id="ENOG502ZPKF">
    <property type="taxonomic scope" value="Bacteria"/>
</dbReference>
<dbReference type="InParanoid" id="P9WM31"/>
<dbReference type="OrthoDB" id="3689128at2"/>
<dbReference type="Proteomes" id="UP000001584">
    <property type="component" value="Chromosome"/>
</dbReference>
<dbReference type="GO" id="GO:0005886">
    <property type="term" value="C:plasma membrane"/>
    <property type="evidence" value="ECO:0007669"/>
    <property type="project" value="UniProtKB-SubCell"/>
</dbReference>
<dbReference type="InterPro" id="IPR005598">
    <property type="entry name" value="ATP_synth_I"/>
</dbReference>
<dbReference type="Pfam" id="PF03899">
    <property type="entry name" value="ATP-synt_I"/>
    <property type="match status" value="1"/>
</dbReference>